<reference key="1">
    <citation type="journal article" date="2007" name="BMC Microbiol.">
        <title>Subtle genetic changes enhance virulence of methicillin resistant and sensitive Staphylococcus aureus.</title>
        <authorList>
            <person name="Highlander S.K."/>
            <person name="Hulten K.G."/>
            <person name="Qin X."/>
            <person name="Jiang H."/>
            <person name="Yerrapragada S."/>
            <person name="Mason E.O. Jr."/>
            <person name="Shang Y."/>
            <person name="Williams T.M."/>
            <person name="Fortunov R.M."/>
            <person name="Liu Y."/>
            <person name="Igboeli O."/>
            <person name="Petrosino J."/>
            <person name="Tirumalai M."/>
            <person name="Uzman A."/>
            <person name="Fox G.E."/>
            <person name="Cardenas A.M."/>
            <person name="Muzny D.M."/>
            <person name="Hemphill L."/>
            <person name="Ding Y."/>
            <person name="Dugan S."/>
            <person name="Blyth P.R."/>
            <person name="Buhay C.J."/>
            <person name="Dinh H.H."/>
            <person name="Hawes A.C."/>
            <person name="Holder M."/>
            <person name="Kovar C.L."/>
            <person name="Lee S.L."/>
            <person name="Liu W."/>
            <person name="Nazareth L.V."/>
            <person name="Wang Q."/>
            <person name="Zhou J."/>
            <person name="Kaplan S.L."/>
            <person name="Weinstock G.M."/>
        </authorList>
    </citation>
    <scope>NUCLEOTIDE SEQUENCE [LARGE SCALE GENOMIC DNA]</scope>
    <source>
        <strain>USA300 / TCH1516</strain>
    </source>
</reference>
<protein>
    <recommendedName>
        <fullName evidence="1">Protein SprT-like</fullName>
    </recommendedName>
</protein>
<dbReference type="EMBL" id="CP000730">
    <property type="protein sequence ID" value="ABX30054.1"/>
    <property type="molecule type" value="Genomic_DNA"/>
</dbReference>
<dbReference type="RefSeq" id="WP_001058111.1">
    <property type="nucleotide sequence ID" value="NC_010079.1"/>
</dbReference>
<dbReference type="KEGG" id="sax:USA300HOU_2057"/>
<dbReference type="HOGENOM" id="CLU_123820_0_0_9"/>
<dbReference type="BioCyc" id="SAUR451516-HMP:GTV5-2130-MONOMER"/>
<dbReference type="GO" id="GO:0005737">
    <property type="term" value="C:cytoplasm"/>
    <property type="evidence" value="ECO:0007669"/>
    <property type="project" value="UniProtKB-SubCell"/>
</dbReference>
<dbReference type="GO" id="GO:0008270">
    <property type="term" value="F:zinc ion binding"/>
    <property type="evidence" value="ECO:0007669"/>
    <property type="project" value="UniProtKB-UniRule"/>
</dbReference>
<dbReference type="GO" id="GO:0006950">
    <property type="term" value="P:response to stress"/>
    <property type="evidence" value="ECO:0007669"/>
    <property type="project" value="UniProtKB-ARBA"/>
</dbReference>
<dbReference type="HAMAP" id="MF_00745">
    <property type="entry name" value="SprT_like"/>
    <property type="match status" value="1"/>
</dbReference>
<dbReference type="InterPro" id="IPR006640">
    <property type="entry name" value="SprT-like_domain"/>
</dbReference>
<dbReference type="InterPro" id="IPR035240">
    <property type="entry name" value="SprT_Zn_ribbon"/>
</dbReference>
<dbReference type="InterPro" id="IPR023524">
    <property type="entry name" value="Uncharacterised_SprT-like"/>
</dbReference>
<dbReference type="NCBIfam" id="NF003339">
    <property type="entry name" value="PRK04351.1"/>
    <property type="match status" value="1"/>
</dbReference>
<dbReference type="Pfam" id="PF10263">
    <property type="entry name" value="SprT-like"/>
    <property type="match status" value="1"/>
</dbReference>
<dbReference type="Pfam" id="PF17283">
    <property type="entry name" value="Zn_ribbon_SprT"/>
    <property type="match status" value="1"/>
</dbReference>
<dbReference type="SMART" id="SM00731">
    <property type="entry name" value="SprT"/>
    <property type="match status" value="1"/>
</dbReference>
<organism>
    <name type="scientific">Staphylococcus aureus (strain USA300 / TCH1516)</name>
    <dbReference type="NCBI Taxonomy" id="451516"/>
    <lineage>
        <taxon>Bacteria</taxon>
        <taxon>Bacillati</taxon>
        <taxon>Bacillota</taxon>
        <taxon>Bacilli</taxon>
        <taxon>Bacillales</taxon>
        <taxon>Staphylococcaceae</taxon>
        <taxon>Staphylococcus</taxon>
    </lineage>
</organism>
<gene>
    <name type="ordered locus">USA300HOU_2057</name>
</gene>
<name>SPRTL_STAAT</name>
<evidence type="ECO:0000255" key="1">
    <source>
        <dbReference type="HAMAP-Rule" id="MF_00745"/>
    </source>
</evidence>
<feature type="chain" id="PRO_1000083479" description="Protein SprT-like">
    <location>
        <begin position="1"/>
        <end position="151"/>
    </location>
</feature>
<feature type="domain" description="SprT-like" evidence="1">
    <location>
        <begin position="6"/>
        <end position="147"/>
    </location>
</feature>
<feature type="active site" evidence="1">
    <location>
        <position position="68"/>
    </location>
</feature>
<feature type="binding site" evidence="1">
    <location>
        <position position="67"/>
    </location>
    <ligand>
        <name>Zn(2+)</name>
        <dbReference type="ChEBI" id="CHEBI:29105"/>
    </ligand>
</feature>
<feature type="binding site" evidence="1">
    <location>
        <position position="71"/>
    </location>
    <ligand>
        <name>Zn(2+)</name>
        <dbReference type="ChEBI" id="CHEBI:29105"/>
    </ligand>
</feature>
<comment type="cofactor">
    <cofactor evidence="1">
        <name>Zn(2+)</name>
        <dbReference type="ChEBI" id="CHEBI:29105"/>
    </cofactor>
    <text evidence="1">Binds 1 zinc ion.</text>
</comment>
<comment type="subcellular location">
    <subcellularLocation>
        <location evidence="1">Cytoplasm</location>
    </subcellularLocation>
</comment>
<comment type="similarity">
    <text evidence="1">Belongs to the SprT family.</text>
</comment>
<accession>A8Z4W5</accession>
<proteinExistence type="inferred from homology"/>
<sequence length="151" mass="18186">MNNDKLQRMVENLSEEKFGRTFRHCAYFNKRLRTTGGRYLLKSHDIEINPKQYEHYGEDAVVKIILHELCHYHLHIAGKGYQHKDQDFKRLSQQVGAPRFCNSIESYQQRANYEYYCTKCHAKYIRIRKVDTNRMRCGHCNGKLRMKRQLK</sequence>
<keyword id="KW-0963">Cytoplasm</keyword>
<keyword id="KW-0479">Metal-binding</keyword>
<keyword id="KW-0862">Zinc</keyword>